<feature type="chain" id="PRO_0000381032" description="Putative 8-amino-7-oxononanoate synthase">
    <location>
        <begin position="1"/>
        <end position="385"/>
    </location>
</feature>
<feature type="binding site" evidence="1">
    <location>
        <position position="22"/>
    </location>
    <ligand>
        <name>substrate</name>
    </ligand>
</feature>
<feature type="binding site" evidence="1">
    <location>
        <begin position="109"/>
        <end position="110"/>
    </location>
    <ligand>
        <name>pyridoxal 5'-phosphate</name>
        <dbReference type="ChEBI" id="CHEBI:597326"/>
    </ligand>
</feature>
<feature type="binding site" evidence="1">
    <location>
        <position position="134"/>
    </location>
    <ligand>
        <name>substrate</name>
    </ligand>
</feature>
<feature type="binding site" evidence="1">
    <location>
        <position position="182"/>
    </location>
    <ligand>
        <name>pyridoxal 5'-phosphate</name>
        <dbReference type="ChEBI" id="CHEBI:597326"/>
    </ligand>
</feature>
<feature type="binding site" evidence="1">
    <location>
        <begin position="207"/>
        <end position="210"/>
    </location>
    <ligand>
        <name>pyridoxal 5'-phosphate</name>
        <dbReference type="ChEBI" id="CHEBI:597326"/>
    </ligand>
</feature>
<feature type="binding site" evidence="1">
    <location>
        <begin position="238"/>
        <end position="241"/>
    </location>
    <ligand>
        <name>pyridoxal 5'-phosphate</name>
        <dbReference type="ChEBI" id="CHEBI:597326"/>
    </ligand>
</feature>
<feature type="binding site" evidence="1">
    <location>
        <position position="353"/>
    </location>
    <ligand>
        <name>substrate</name>
    </ligand>
</feature>
<feature type="modified residue" description="N6-(pyridoxal phosphate)lysine" evidence="1">
    <location>
        <position position="241"/>
    </location>
</feature>
<dbReference type="EC" id="2.3.1.47"/>
<dbReference type="EMBL" id="AP009552">
    <property type="protein sequence ID" value="BAG03859.1"/>
    <property type="molecule type" value="Genomic_DNA"/>
</dbReference>
<dbReference type="RefSeq" id="WP_002747137.1">
    <property type="nucleotide sequence ID" value="NC_010296.1"/>
</dbReference>
<dbReference type="SMR" id="B0JQZ0"/>
<dbReference type="STRING" id="449447.MAE_40370"/>
<dbReference type="PaxDb" id="449447-MAE_40370"/>
<dbReference type="EnsemblBacteria" id="BAG03859">
    <property type="protein sequence ID" value="BAG03859"/>
    <property type="gene ID" value="MAE_40370"/>
</dbReference>
<dbReference type="KEGG" id="mar:MAE_40370"/>
<dbReference type="eggNOG" id="COG0156">
    <property type="taxonomic scope" value="Bacteria"/>
</dbReference>
<dbReference type="HOGENOM" id="CLU_015846_11_0_3"/>
<dbReference type="BioCyc" id="MAER449447:MAE_RS17475-MONOMER"/>
<dbReference type="UniPathway" id="UPA00078"/>
<dbReference type="Proteomes" id="UP000001510">
    <property type="component" value="Chromosome"/>
</dbReference>
<dbReference type="GO" id="GO:0008710">
    <property type="term" value="F:8-amino-7-oxononanoate synthase activity"/>
    <property type="evidence" value="ECO:0007669"/>
    <property type="project" value="UniProtKB-EC"/>
</dbReference>
<dbReference type="GO" id="GO:0030170">
    <property type="term" value="F:pyridoxal phosphate binding"/>
    <property type="evidence" value="ECO:0007669"/>
    <property type="project" value="InterPro"/>
</dbReference>
<dbReference type="GO" id="GO:0009102">
    <property type="term" value="P:biotin biosynthetic process"/>
    <property type="evidence" value="ECO:0007669"/>
    <property type="project" value="UniProtKB-UniPathway"/>
</dbReference>
<dbReference type="CDD" id="cd06454">
    <property type="entry name" value="KBL_like"/>
    <property type="match status" value="1"/>
</dbReference>
<dbReference type="Gene3D" id="3.90.1150.10">
    <property type="entry name" value="Aspartate Aminotransferase, domain 1"/>
    <property type="match status" value="1"/>
</dbReference>
<dbReference type="Gene3D" id="3.40.640.10">
    <property type="entry name" value="Type I PLP-dependent aspartate aminotransferase-like (Major domain)"/>
    <property type="match status" value="1"/>
</dbReference>
<dbReference type="InterPro" id="IPR001917">
    <property type="entry name" value="Aminotrans_II_pyridoxalP_BS"/>
</dbReference>
<dbReference type="InterPro" id="IPR004839">
    <property type="entry name" value="Aminotransferase_I/II_large"/>
</dbReference>
<dbReference type="InterPro" id="IPR050087">
    <property type="entry name" value="AON_synthase_class-II"/>
</dbReference>
<dbReference type="InterPro" id="IPR004723">
    <property type="entry name" value="AONS_Archaea/Proteobacteria"/>
</dbReference>
<dbReference type="InterPro" id="IPR015424">
    <property type="entry name" value="PyrdxlP-dep_Trfase"/>
</dbReference>
<dbReference type="InterPro" id="IPR015421">
    <property type="entry name" value="PyrdxlP-dep_Trfase_major"/>
</dbReference>
<dbReference type="InterPro" id="IPR015422">
    <property type="entry name" value="PyrdxlP-dep_Trfase_small"/>
</dbReference>
<dbReference type="NCBIfam" id="TIGR00858">
    <property type="entry name" value="bioF"/>
    <property type="match status" value="1"/>
</dbReference>
<dbReference type="PANTHER" id="PTHR13693:SF100">
    <property type="entry name" value="8-AMINO-7-OXONONANOATE SYNTHASE"/>
    <property type="match status" value="1"/>
</dbReference>
<dbReference type="PANTHER" id="PTHR13693">
    <property type="entry name" value="CLASS II AMINOTRANSFERASE/8-AMINO-7-OXONONANOATE SYNTHASE"/>
    <property type="match status" value="1"/>
</dbReference>
<dbReference type="Pfam" id="PF00155">
    <property type="entry name" value="Aminotran_1_2"/>
    <property type="match status" value="1"/>
</dbReference>
<dbReference type="SUPFAM" id="SSF53383">
    <property type="entry name" value="PLP-dependent transferases"/>
    <property type="match status" value="1"/>
</dbReference>
<dbReference type="PROSITE" id="PS00599">
    <property type="entry name" value="AA_TRANSFER_CLASS_2"/>
    <property type="match status" value="1"/>
</dbReference>
<protein>
    <recommendedName>
        <fullName>Putative 8-amino-7-oxononanoate synthase</fullName>
        <shortName>AONS</shortName>
        <ecNumber>2.3.1.47</ecNumber>
    </recommendedName>
    <alternativeName>
        <fullName>7-keto-8-amino-pelargonic acid synthase</fullName>
        <shortName>7-KAP synthase</shortName>
    </alternativeName>
    <alternativeName>
        <fullName>8-amino-7-ketopelargonate synthase</fullName>
    </alternativeName>
</protein>
<gene>
    <name type="primary">bioF</name>
    <name type="ordered locus">MAE_40370</name>
</gene>
<proteinExistence type="inferred from homology"/>
<sequence length="385" mass="42065">MNHPYSWIEDSLKTLHRANWYRRVKTIQGRGGAVIELEGRSLINFASNDYLGLAADERMIAAAIAATQRYGTGSTGSRLLSGHRDLHRDLELAIASFKNSEDAIVFSSGYLANLGTITCLVGQKDLILGDQYNHSSLKNGAKLSGATVKEYRHNSLEDLENQLLAHRHHYRHCLLLTDTVFSMDGDICPLAGILALAEIYNCMVLVDEAHATGVMGENGTGCVEYCGCQGRELIQMGTLSKALGSLGGYVTGNAKIIDFIRNRAATWIYTTGLSPADTAAARMALEIIRLEPERRQRLHQNINFVKSKLNNLNILPSEAAILCLPVANPGQALELSQKLLEKGIFAPAIRPPTVPTSRLRFTAMATHSLAHLEVLVQSIGESFPT</sequence>
<reference key="1">
    <citation type="journal article" date="2007" name="DNA Res.">
        <title>Complete genomic structure of the bloom-forming toxic cyanobacterium Microcystis aeruginosa NIES-843.</title>
        <authorList>
            <person name="Kaneko T."/>
            <person name="Nakajima N."/>
            <person name="Okamoto S."/>
            <person name="Suzuki I."/>
            <person name="Tanabe Y."/>
            <person name="Tamaoki M."/>
            <person name="Nakamura Y."/>
            <person name="Kasai F."/>
            <person name="Watanabe A."/>
            <person name="Kawashima K."/>
            <person name="Kishida Y."/>
            <person name="Ono A."/>
            <person name="Shimizu Y."/>
            <person name="Takahashi C."/>
            <person name="Minami C."/>
            <person name="Fujishiro T."/>
            <person name="Kohara M."/>
            <person name="Katoh M."/>
            <person name="Nakazaki N."/>
            <person name="Nakayama S."/>
            <person name="Yamada M."/>
            <person name="Tabata S."/>
            <person name="Watanabe M.M."/>
        </authorList>
    </citation>
    <scope>NUCLEOTIDE SEQUENCE [LARGE SCALE GENOMIC DNA]</scope>
    <source>
        <strain>NIES-843 / IAM M-247</strain>
    </source>
</reference>
<keyword id="KW-0093">Biotin biosynthesis</keyword>
<keyword id="KW-0663">Pyridoxal phosphate</keyword>
<keyword id="KW-0808">Transferase</keyword>
<evidence type="ECO:0000250" key="1"/>
<evidence type="ECO:0000305" key="2"/>
<comment type="function">
    <text evidence="1">Catalyzes the decarboxylative condensation of pimeloyl-[acyl-carrier protein] and L-alanine to produce 8-amino-7-oxononanoate (AON), [acyl-carrier protein], and carbon dioxide.</text>
</comment>
<comment type="catalytic activity">
    <reaction>
        <text>6-carboxyhexanoyl-[ACP] + L-alanine + H(+) = (8S)-8-amino-7-oxononanoate + holo-[ACP] + CO2</text>
        <dbReference type="Rhea" id="RHEA:42288"/>
        <dbReference type="Rhea" id="RHEA-COMP:9685"/>
        <dbReference type="Rhea" id="RHEA-COMP:9955"/>
        <dbReference type="ChEBI" id="CHEBI:15378"/>
        <dbReference type="ChEBI" id="CHEBI:16526"/>
        <dbReference type="ChEBI" id="CHEBI:57972"/>
        <dbReference type="ChEBI" id="CHEBI:64479"/>
        <dbReference type="ChEBI" id="CHEBI:78846"/>
        <dbReference type="ChEBI" id="CHEBI:149468"/>
        <dbReference type="EC" id="2.3.1.47"/>
    </reaction>
</comment>
<comment type="cofactor">
    <cofactor evidence="1">
        <name>pyridoxal 5'-phosphate</name>
        <dbReference type="ChEBI" id="CHEBI:597326"/>
    </cofactor>
</comment>
<comment type="pathway">
    <text>Cofactor biosynthesis; biotin biosynthesis.</text>
</comment>
<comment type="subunit">
    <text evidence="1">Homodimer.</text>
</comment>
<comment type="similarity">
    <text evidence="2">Belongs to the class-II pyridoxal-phosphate-dependent aminotransferase family. BioF subfamily.</text>
</comment>
<accession>B0JQZ0</accession>
<name>BIOF_MICAN</name>
<organism>
    <name type="scientific">Microcystis aeruginosa (strain NIES-843 / IAM M-2473)</name>
    <dbReference type="NCBI Taxonomy" id="449447"/>
    <lineage>
        <taxon>Bacteria</taxon>
        <taxon>Bacillati</taxon>
        <taxon>Cyanobacteriota</taxon>
        <taxon>Cyanophyceae</taxon>
        <taxon>Oscillatoriophycideae</taxon>
        <taxon>Chroococcales</taxon>
        <taxon>Microcystaceae</taxon>
        <taxon>Microcystis</taxon>
    </lineage>
</organism>